<feature type="chain" id="PRO_0000192654" description="Sec-independent protein translocase protein TatB">
    <location>
        <begin position="1"/>
        <end position="171"/>
    </location>
</feature>
<feature type="transmembrane region" description="Helical" evidence="1">
    <location>
        <begin position="1"/>
        <end position="21"/>
    </location>
</feature>
<feature type="region of interest" description="Disordered" evidence="2">
    <location>
        <begin position="117"/>
        <end position="171"/>
    </location>
</feature>
<feature type="compositionally biased region" description="Polar residues" evidence="2">
    <location>
        <begin position="130"/>
        <end position="139"/>
    </location>
</feature>
<organism>
    <name type="scientific">Escherichia coli O157:H7</name>
    <dbReference type="NCBI Taxonomy" id="83334"/>
    <lineage>
        <taxon>Bacteria</taxon>
        <taxon>Pseudomonadati</taxon>
        <taxon>Pseudomonadota</taxon>
        <taxon>Gammaproteobacteria</taxon>
        <taxon>Enterobacterales</taxon>
        <taxon>Enterobacteriaceae</taxon>
        <taxon>Escherichia</taxon>
    </lineage>
</organism>
<protein>
    <recommendedName>
        <fullName evidence="1">Sec-independent protein translocase protein TatB</fullName>
    </recommendedName>
</protein>
<evidence type="ECO:0000255" key="1">
    <source>
        <dbReference type="HAMAP-Rule" id="MF_00237"/>
    </source>
</evidence>
<evidence type="ECO:0000256" key="2">
    <source>
        <dbReference type="SAM" id="MobiDB-lite"/>
    </source>
</evidence>
<evidence type="ECO:0000305" key="3"/>
<keyword id="KW-0997">Cell inner membrane</keyword>
<keyword id="KW-1003">Cell membrane</keyword>
<keyword id="KW-0472">Membrane</keyword>
<keyword id="KW-0653">Protein transport</keyword>
<keyword id="KW-1185">Reference proteome</keyword>
<keyword id="KW-0811">Translocation</keyword>
<keyword id="KW-0812">Transmembrane</keyword>
<keyword id="KW-1133">Transmembrane helix</keyword>
<keyword id="KW-0813">Transport</keyword>
<accession>P69426</accession>
<accession>O69415</accession>
<accession>O87926</accession>
<accession>P27856</accession>
<comment type="function">
    <text evidence="1">Part of the twin-arginine translocation (Tat) system that transports large folded proteins containing a characteristic twin-arginine motif in their signal peptide across membranes. Together with TatC, TatB is part of a receptor directly interacting with Tat signal peptides. TatB may form an oligomeric binding site that transiently accommodates folded Tat precursor proteins before their translocation.</text>
</comment>
<comment type="subunit">
    <text evidence="1">The Tat system comprises two distinct complexes: a TatABC complex, containing multiple copies of TatA, TatB and TatC subunits, and a separate TatA complex, containing only TatA subunits. Substrates initially bind to the TatABC complex, which probably triggers association of the separate TatA complex to form the active translocon.</text>
</comment>
<comment type="subcellular location">
    <subcellularLocation>
        <location evidence="1">Cell inner membrane</location>
        <topology evidence="1">Single-pass membrane protein</topology>
    </subcellularLocation>
</comment>
<comment type="similarity">
    <text evidence="1">Belongs to the TatB family.</text>
</comment>
<comment type="sequence caution" evidence="3">
    <conflict type="erroneous initiation">
        <sequence resource="EMBL-CDS" id="AAG59033"/>
    </conflict>
</comment>
<sequence>MFDIGFSELLLVFIIGLVVLGPQRLPVAVKTVAGWIRALRSLATTVQNELTQELKLQEFQDSLKKVEKASLTNLTPELKASMDELRQAAESMKRSYVANDPEKASDEAHTIHNPVVKDNEAAHEGVTPAAAQTQASSPEQKPETTPEPVVKPAADAEPKTAAPSPSSSDKP</sequence>
<reference key="1">
    <citation type="journal article" date="2001" name="Nature">
        <title>Genome sequence of enterohaemorrhagic Escherichia coli O157:H7.</title>
        <authorList>
            <person name="Perna N.T."/>
            <person name="Plunkett G. III"/>
            <person name="Burland V."/>
            <person name="Mau B."/>
            <person name="Glasner J.D."/>
            <person name="Rose D.J."/>
            <person name="Mayhew G.F."/>
            <person name="Evans P.S."/>
            <person name="Gregor J."/>
            <person name="Kirkpatrick H.A."/>
            <person name="Posfai G."/>
            <person name="Hackett J."/>
            <person name="Klink S."/>
            <person name="Boutin A."/>
            <person name="Shao Y."/>
            <person name="Miller L."/>
            <person name="Grotbeck E.J."/>
            <person name="Davis N.W."/>
            <person name="Lim A."/>
            <person name="Dimalanta E.T."/>
            <person name="Potamousis K."/>
            <person name="Apodaca J."/>
            <person name="Anantharaman T.S."/>
            <person name="Lin J."/>
            <person name="Yen G."/>
            <person name="Schwartz D.C."/>
            <person name="Welch R.A."/>
            <person name="Blattner F.R."/>
        </authorList>
    </citation>
    <scope>NUCLEOTIDE SEQUENCE [LARGE SCALE GENOMIC DNA]</scope>
    <source>
        <strain>O157:H7 / EDL933 / ATCC 700927 / EHEC</strain>
    </source>
</reference>
<reference key="2">
    <citation type="journal article" date="2001" name="DNA Res.">
        <title>Complete genome sequence of enterohemorrhagic Escherichia coli O157:H7 and genomic comparison with a laboratory strain K-12.</title>
        <authorList>
            <person name="Hayashi T."/>
            <person name="Makino K."/>
            <person name="Ohnishi M."/>
            <person name="Kurokawa K."/>
            <person name="Ishii K."/>
            <person name="Yokoyama K."/>
            <person name="Han C.-G."/>
            <person name="Ohtsubo E."/>
            <person name="Nakayama K."/>
            <person name="Murata T."/>
            <person name="Tanaka M."/>
            <person name="Tobe T."/>
            <person name="Iida T."/>
            <person name="Takami H."/>
            <person name="Honda T."/>
            <person name="Sasakawa C."/>
            <person name="Ogasawara N."/>
            <person name="Yasunaga T."/>
            <person name="Kuhara S."/>
            <person name="Shiba T."/>
            <person name="Hattori M."/>
            <person name="Shinagawa H."/>
        </authorList>
    </citation>
    <scope>NUCLEOTIDE SEQUENCE [LARGE SCALE GENOMIC DNA]</scope>
    <source>
        <strain>O157:H7 / Sakai / RIMD 0509952 / EHEC</strain>
    </source>
</reference>
<name>TATB_ECO57</name>
<proteinExistence type="inferred from homology"/>
<dbReference type="EMBL" id="AE005174">
    <property type="protein sequence ID" value="AAG59033.1"/>
    <property type="status" value="ALT_INIT"/>
    <property type="molecule type" value="Genomic_DNA"/>
</dbReference>
<dbReference type="EMBL" id="BA000007">
    <property type="protein sequence ID" value="BAB38190.1"/>
    <property type="molecule type" value="Genomic_DNA"/>
</dbReference>
<dbReference type="RefSeq" id="NP_312794.1">
    <property type="nucleotide sequence ID" value="NC_002695.1"/>
</dbReference>
<dbReference type="RefSeq" id="WP_000459594.1">
    <property type="nucleotide sequence ID" value="NZ_VOAI01000017.1"/>
</dbReference>
<dbReference type="SMR" id="P69426"/>
<dbReference type="STRING" id="155864.Z5359"/>
<dbReference type="GeneID" id="915137"/>
<dbReference type="GeneID" id="93778098"/>
<dbReference type="KEGG" id="ece:Z5359"/>
<dbReference type="KEGG" id="ecs:ECs_4767"/>
<dbReference type="PATRIC" id="fig|386585.9.peg.4976"/>
<dbReference type="eggNOG" id="COG1826">
    <property type="taxonomic scope" value="Bacteria"/>
</dbReference>
<dbReference type="HOGENOM" id="CLU_086034_1_0_6"/>
<dbReference type="OMA" id="ADQPRTH"/>
<dbReference type="Proteomes" id="UP000000558">
    <property type="component" value="Chromosome"/>
</dbReference>
<dbReference type="Proteomes" id="UP000002519">
    <property type="component" value="Chromosome"/>
</dbReference>
<dbReference type="GO" id="GO:0033281">
    <property type="term" value="C:TAT protein transport complex"/>
    <property type="evidence" value="ECO:0007669"/>
    <property type="project" value="UniProtKB-UniRule"/>
</dbReference>
<dbReference type="GO" id="GO:0008320">
    <property type="term" value="F:protein transmembrane transporter activity"/>
    <property type="evidence" value="ECO:0007669"/>
    <property type="project" value="UniProtKB-UniRule"/>
</dbReference>
<dbReference type="GO" id="GO:0043953">
    <property type="term" value="P:protein transport by the Tat complex"/>
    <property type="evidence" value="ECO:0007669"/>
    <property type="project" value="UniProtKB-UniRule"/>
</dbReference>
<dbReference type="FunFam" id="1.20.5.3310:FF:000002">
    <property type="entry name" value="Sec-independent protein translocase protein TatB"/>
    <property type="match status" value="1"/>
</dbReference>
<dbReference type="Gene3D" id="1.20.5.3310">
    <property type="match status" value="1"/>
</dbReference>
<dbReference type="HAMAP" id="MF_00237">
    <property type="entry name" value="TatB"/>
    <property type="match status" value="1"/>
</dbReference>
<dbReference type="InterPro" id="IPR018448">
    <property type="entry name" value="TatB"/>
</dbReference>
<dbReference type="NCBIfam" id="TIGR01410">
    <property type="entry name" value="tatB"/>
    <property type="match status" value="1"/>
</dbReference>
<dbReference type="PANTHER" id="PTHR33162">
    <property type="entry name" value="SEC-INDEPENDENT PROTEIN TRANSLOCASE PROTEIN TATA, CHLOROPLASTIC"/>
    <property type="match status" value="1"/>
</dbReference>
<dbReference type="PANTHER" id="PTHR33162:SF1">
    <property type="entry name" value="SEC-INDEPENDENT PROTEIN TRANSLOCASE PROTEIN TATA, CHLOROPLASTIC"/>
    <property type="match status" value="1"/>
</dbReference>
<dbReference type="PRINTS" id="PR01506">
    <property type="entry name" value="TATBPROTEIN"/>
</dbReference>
<gene>
    <name evidence="1" type="primary">tatB</name>
    <name type="synonym">mttA2</name>
    <name type="ordered locus">Z5359</name>
    <name type="ordered locus">ECs4767</name>
</gene>